<protein>
    <recommendedName>
        <fullName>S-formylglutathione hydrolase</fullName>
        <shortName>FGH</shortName>
        <ecNumber>3.1.2.12</ecNumber>
    </recommendedName>
    <alternativeName>
        <fullName>Esterase D</fullName>
    </alternativeName>
</protein>
<evidence type="ECO:0000250" key="1"/>
<evidence type="ECO:0000250" key="2">
    <source>
        <dbReference type="UniProtKB" id="Q9R0P3"/>
    </source>
</evidence>
<evidence type="ECO:0000305" key="3"/>
<gene>
    <name type="primary">ESD</name>
</gene>
<dbReference type="EC" id="3.1.2.12"/>
<dbReference type="EMBL" id="BC123461">
    <property type="protein sequence ID" value="AAI23462.1"/>
    <property type="molecule type" value="mRNA"/>
</dbReference>
<dbReference type="RefSeq" id="NP_001069533.1">
    <property type="nucleotide sequence ID" value="NM_001076065.1"/>
</dbReference>
<dbReference type="RefSeq" id="XP_005213718.1">
    <property type="nucleotide sequence ID" value="XM_005213661.4"/>
</dbReference>
<dbReference type="RefSeq" id="XP_005213719.1">
    <property type="nucleotide sequence ID" value="XM_005213662.5"/>
</dbReference>
<dbReference type="RefSeq" id="XP_024855686.1">
    <property type="nucleotide sequence ID" value="XM_024999918.2"/>
</dbReference>
<dbReference type="RefSeq" id="XP_024855687.1">
    <property type="nucleotide sequence ID" value="XM_024999919.2"/>
</dbReference>
<dbReference type="SMR" id="Q08E20"/>
<dbReference type="FunCoup" id="Q08E20">
    <property type="interactions" value="2588"/>
</dbReference>
<dbReference type="STRING" id="9913.ENSBTAP00000065737"/>
<dbReference type="ESTHER" id="bovin-estd">
    <property type="family name" value="A85-EsteraseD-FGH"/>
</dbReference>
<dbReference type="PaxDb" id="9913-ENSBTAP00000004431"/>
<dbReference type="PeptideAtlas" id="Q08E20"/>
<dbReference type="GeneID" id="535653"/>
<dbReference type="KEGG" id="bta:535653"/>
<dbReference type="CTD" id="2098"/>
<dbReference type="VEuPathDB" id="HostDB:ENSBTAG00000003415"/>
<dbReference type="eggNOG" id="KOG3101">
    <property type="taxonomic scope" value="Eukaryota"/>
</dbReference>
<dbReference type="HOGENOM" id="CLU_056472_0_0_1"/>
<dbReference type="InParanoid" id="Q08E20"/>
<dbReference type="OrthoDB" id="420518at2759"/>
<dbReference type="TreeFam" id="TF300793"/>
<dbReference type="Reactome" id="R-BTA-156590">
    <property type="pathway name" value="Glutathione conjugation"/>
</dbReference>
<dbReference type="Proteomes" id="UP000009136">
    <property type="component" value="Chromosome 12"/>
</dbReference>
<dbReference type="Bgee" id="ENSBTAG00000003415">
    <property type="expression patterns" value="Expressed in esophagus and 106 other cell types or tissues"/>
</dbReference>
<dbReference type="GO" id="GO:0031410">
    <property type="term" value="C:cytoplasmic vesicle"/>
    <property type="evidence" value="ECO:0007669"/>
    <property type="project" value="UniProtKB-KW"/>
</dbReference>
<dbReference type="GO" id="GO:0005829">
    <property type="term" value="C:cytosol"/>
    <property type="evidence" value="ECO:0000318"/>
    <property type="project" value="GO_Central"/>
</dbReference>
<dbReference type="GO" id="GO:0052689">
    <property type="term" value="F:carboxylic ester hydrolase activity"/>
    <property type="evidence" value="ECO:0007669"/>
    <property type="project" value="UniProtKB-KW"/>
</dbReference>
<dbReference type="GO" id="GO:0018738">
    <property type="term" value="F:S-formylglutathione hydrolase activity"/>
    <property type="evidence" value="ECO:0000318"/>
    <property type="project" value="GO_Central"/>
</dbReference>
<dbReference type="GO" id="GO:0046294">
    <property type="term" value="P:formaldehyde catabolic process"/>
    <property type="evidence" value="ECO:0007669"/>
    <property type="project" value="InterPro"/>
</dbReference>
<dbReference type="FunFam" id="3.40.50.1820:FF:000002">
    <property type="entry name" value="S-formylglutathione hydrolase"/>
    <property type="match status" value="1"/>
</dbReference>
<dbReference type="Gene3D" id="3.40.50.1820">
    <property type="entry name" value="alpha/beta hydrolase"/>
    <property type="match status" value="1"/>
</dbReference>
<dbReference type="InterPro" id="IPR029058">
    <property type="entry name" value="AB_hydrolase_fold"/>
</dbReference>
<dbReference type="InterPro" id="IPR000801">
    <property type="entry name" value="Esterase-like"/>
</dbReference>
<dbReference type="InterPro" id="IPR014186">
    <property type="entry name" value="S-formylglutathione_hydrol"/>
</dbReference>
<dbReference type="NCBIfam" id="TIGR02821">
    <property type="entry name" value="fghA_ester_D"/>
    <property type="match status" value="1"/>
</dbReference>
<dbReference type="PANTHER" id="PTHR10061">
    <property type="entry name" value="S-FORMYLGLUTATHIONE HYDROLASE"/>
    <property type="match status" value="1"/>
</dbReference>
<dbReference type="PANTHER" id="PTHR10061:SF0">
    <property type="entry name" value="S-FORMYLGLUTATHIONE HYDROLASE"/>
    <property type="match status" value="1"/>
</dbReference>
<dbReference type="Pfam" id="PF00756">
    <property type="entry name" value="Esterase"/>
    <property type="match status" value="1"/>
</dbReference>
<dbReference type="SUPFAM" id="SSF53474">
    <property type="entry name" value="alpha/beta-Hydrolases"/>
    <property type="match status" value="1"/>
</dbReference>
<organism>
    <name type="scientific">Bos taurus</name>
    <name type="common">Bovine</name>
    <dbReference type="NCBI Taxonomy" id="9913"/>
    <lineage>
        <taxon>Eukaryota</taxon>
        <taxon>Metazoa</taxon>
        <taxon>Chordata</taxon>
        <taxon>Craniata</taxon>
        <taxon>Vertebrata</taxon>
        <taxon>Euteleostomi</taxon>
        <taxon>Mammalia</taxon>
        <taxon>Eutheria</taxon>
        <taxon>Laurasiatheria</taxon>
        <taxon>Artiodactyla</taxon>
        <taxon>Ruminantia</taxon>
        <taxon>Pecora</taxon>
        <taxon>Bovidae</taxon>
        <taxon>Bovinae</taxon>
        <taxon>Bos</taxon>
    </lineage>
</organism>
<comment type="function">
    <text evidence="1">Serine hydrolase involved in the detoxification of formaldehyde.</text>
</comment>
<comment type="catalytic activity">
    <reaction>
        <text>S-formylglutathione + H2O = formate + glutathione + H(+)</text>
        <dbReference type="Rhea" id="RHEA:14961"/>
        <dbReference type="ChEBI" id="CHEBI:15377"/>
        <dbReference type="ChEBI" id="CHEBI:15378"/>
        <dbReference type="ChEBI" id="CHEBI:15740"/>
        <dbReference type="ChEBI" id="CHEBI:57688"/>
        <dbReference type="ChEBI" id="CHEBI:57925"/>
        <dbReference type="EC" id="3.1.2.12"/>
    </reaction>
</comment>
<comment type="subunit">
    <text evidence="1">Homodimer.</text>
</comment>
<comment type="subcellular location">
    <subcellularLocation>
        <location>Cytoplasm</location>
    </subcellularLocation>
    <subcellularLocation>
        <location evidence="1">Cytoplasmic vesicle</location>
    </subcellularLocation>
</comment>
<comment type="similarity">
    <text evidence="3">Belongs to the esterase D family.</text>
</comment>
<name>ESTD_BOVIN</name>
<sequence>MALKQVSSSKCFGGLQKVFEHDSVELKCKMKFAVYLPPKAETGKCPVLYWLSGLTCTEQNFISKSGYHQAASEHGLVVIAPDTSPRGCNIKGEEDSWDFGTGAGFYVDATEDLWKTNYRMYSYVTKELPQLVNDNFPVDPQRMSVFGHSMGGHGALICALKNPGKYKSVSAFAPLCNPVLCRWGKKAFTGYLGTDQSKWEAYDATYLVKSYPGPQLDILIDQGKEDEFLSDGQLLPDNFIAACTEKKIPVVFRLQEGYDHSYYFIATFIADHIRHHAKYLNA</sequence>
<feature type="initiator methionine" description="Removed" evidence="2">
    <location>
        <position position="1"/>
    </location>
</feature>
<feature type="chain" id="PRO_0000341965" description="S-formylglutathione hydrolase">
    <location>
        <begin position="2"/>
        <end position="282"/>
    </location>
</feature>
<feature type="active site" description="Charge relay system" evidence="1">
    <location>
        <position position="149"/>
    </location>
</feature>
<feature type="active site" description="Charge relay system" evidence="1">
    <location>
        <position position="226"/>
    </location>
</feature>
<feature type="active site" description="Charge relay system" evidence="1">
    <location>
        <position position="260"/>
    </location>
</feature>
<feature type="modified residue" description="N-acetylalanine" evidence="2">
    <location>
        <position position="2"/>
    </location>
</feature>
<feature type="modified residue" description="N6-succinyllysine" evidence="2">
    <location>
        <position position="4"/>
    </location>
</feature>
<reference key="1">
    <citation type="submission" date="2006-09" db="EMBL/GenBank/DDBJ databases">
        <authorList>
            <consortium name="NIH - Mammalian Gene Collection (MGC) project"/>
        </authorList>
    </citation>
    <scope>NUCLEOTIDE SEQUENCE [LARGE SCALE MRNA]</scope>
    <source>
        <strain>Hereford</strain>
        <tissue>Thalamus</tissue>
    </source>
</reference>
<proteinExistence type="evidence at transcript level"/>
<keyword id="KW-0007">Acetylation</keyword>
<keyword id="KW-0963">Cytoplasm</keyword>
<keyword id="KW-0968">Cytoplasmic vesicle</keyword>
<keyword id="KW-0378">Hydrolase</keyword>
<keyword id="KW-1185">Reference proteome</keyword>
<keyword id="KW-0719">Serine esterase</keyword>
<accession>Q08E20</accession>